<keyword id="KW-0002">3D-structure</keyword>
<keyword id="KW-0027">Amidation</keyword>
<keyword id="KW-1265">Chloride channel impairing toxin</keyword>
<keyword id="KW-0903">Direct protein sequencing</keyword>
<keyword id="KW-1015">Disulfide bond</keyword>
<keyword id="KW-0872">Ion channel impairing toxin</keyword>
<keyword id="KW-0960">Knottin</keyword>
<keyword id="KW-0964">Secreted</keyword>
<keyword id="KW-0800">Toxin</keyword>
<keyword id="KW-0870">Voltage-gated chloride channel impairing toxin</keyword>
<reference key="1">
    <citation type="journal article" date="1982" name="Bioorg. Khim.">
        <title>Study of toxic components from the venom of caucasus subspecies of scorpion Buthus eupeus.</title>
        <authorList>
            <person name="Grishin E.V."/>
            <person name="Volkova T.M."/>
            <person name="Soldatova L.N."/>
        </authorList>
    </citation>
    <scope>PROTEIN SEQUENCE</scope>
    <scope>AMIDATION AT ARG-35</scope>
    <scope>SUBCELLULAR LOCATION</scope>
    <source>
        <tissue>Venom</tissue>
    </source>
</reference>
<reference key="2">
    <citation type="journal article" date="1983" name="Bioorg. Khim.">
        <title>Secondary structure and assignment of signals in two-dimensional 1H-NMR spectra of the Buthus eupeus neurotoxin I5A.</title>
        <authorList>
            <person name="Arseniev A.S."/>
            <person name="Kondakov V.I."/>
            <person name="Maiorov V.N."/>
            <person name="Volkova T.M."/>
            <person name="Grishin E.V."/>
        </authorList>
    </citation>
    <scope>SEQUENCE REVISION TO 14 AND 23-24</scope>
    <scope>STRUCTURE BY NMR</scope>
    <scope>DISULFIDE BONDS</scope>
</reference>
<reference key="3">
    <citation type="journal article" date="2018" name="Nat. Struct. Mol. Biol.">
        <title>Screening, large-scale production and structure-based classification of cystine-dense peptides.</title>
        <authorList>
            <person name="Correnti C.E."/>
            <person name="Gewe M.M."/>
            <person name="Mehlin C."/>
            <person name="Bandaranayake A.D."/>
            <person name="Johnsen W.A."/>
            <person name="Rupert P.B."/>
            <person name="Brusniak M.Y."/>
            <person name="Clarke M."/>
            <person name="Burke S.E."/>
            <person name="De Van Der Schueren W."/>
            <person name="Pilat K."/>
            <person name="Turnbaugh S.M."/>
            <person name="May D."/>
            <person name="Watson A."/>
            <person name="Chan M.K."/>
            <person name="Bahl C.D."/>
            <person name="Olson J.M."/>
            <person name="Strong R.K."/>
        </authorList>
    </citation>
    <scope>FUNCTION</scope>
    <scope>SYNTHESIS</scope>
</reference>
<reference key="4">
    <citation type="journal article" date="1983" name="Bioorg. Khim.">
        <title>Conformation NMR analysis of the spatial structure of Buthus eupeus insectotoxin I5A.</title>
        <authorList>
            <person name="Arseniev A.S."/>
            <person name="Kondakov V.I."/>
            <person name="Maiorov V.N."/>
            <person name="Bystrov V.F."/>
            <person name="Ovchinnikov Y.A."/>
        </authorList>
    </citation>
    <scope>STRUCTURE BY NMR</scope>
    <scope>DISULFIDE BONDS</scope>
</reference>
<reference key="5">
    <citation type="journal article" date="1984" name="FEBS Lett.">
        <title>NMR solution spatial structure of 'short' insectotoxin I5A.</title>
        <authorList>
            <person name="Arseniev A.S."/>
            <person name="Kondakov V.I."/>
            <person name="Maiorov V.N."/>
            <person name="Bystrov V.F."/>
        </authorList>
    </citation>
    <scope>STRUCTURE BY NMR</scope>
    <scope>DISULFIDE BONDS</scope>
</reference>
<reference key="6">
    <citation type="journal article" date="1991" name="Bioorg. Khim.">
        <title>Determination of the spatial structure of insectotoxin I5A from Buthus erpeus by (1)H-NMR spectroscopy data.</title>
        <authorList>
            <person name="Lomize A.L."/>
            <person name="Maiorov V.N."/>
            <person name="Arseniev A.S."/>
        </authorList>
    </citation>
    <scope>STRUCTURE BY NMR</scope>
    <scope>DISULFIDE BONDS</scope>
</reference>
<proteinExistence type="evidence at protein level"/>
<evidence type="ECO:0000250" key="1">
    <source>
        <dbReference type="UniProtKB" id="Q9UAD0"/>
    </source>
</evidence>
<evidence type="ECO:0000255" key="2">
    <source>
        <dbReference type="PROSITE-ProRule" id="PRU00545"/>
    </source>
</evidence>
<evidence type="ECO:0000269" key="3">
    <source>
    </source>
</evidence>
<evidence type="ECO:0000269" key="4">
    <source>
    </source>
</evidence>
<evidence type="ECO:0000269" key="5">
    <source ref="1"/>
</evidence>
<evidence type="ECO:0000269" key="6">
    <source ref="5"/>
</evidence>
<evidence type="ECO:0000303" key="7">
    <source ref="1"/>
</evidence>
<evidence type="ECO:0000305" key="8">
    <source ref="1"/>
</evidence>
<evidence type="ECO:0000312" key="9">
    <source>
        <dbReference type="PDB" id="1SIS"/>
    </source>
</evidence>
<evidence type="ECO:0007829" key="10">
    <source>
        <dbReference type="PDB" id="1SIS"/>
    </source>
</evidence>
<comment type="function">
    <text evidence="1 3">Toxin with unknown function in healthy organisms. On glioma cells, interacts with chloride channels (probably ClC-3/CLCN3) and MMP2 at the surface of glioma cells. This complex is then internalized via caveolae, thus inhibiting the chloride channels necessary for cell shrinkage and tumor propagation (By similarity). Has been shown to weakly inhibit TRPV1 channels (PubMed:29483648).</text>
</comment>
<comment type="subcellular location">
    <subcellularLocation>
        <location evidence="5">Secreted</location>
    </subcellularLocation>
</comment>
<comment type="tissue specificity">
    <text evidence="8">Expressed by the venom gland.</text>
</comment>
<comment type="domain">
    <text evidence="4 6 9">The presence of a 'disulfide through disulfide knot' structurally defines this protein as a knottin.</text>
</comment>
<comment type="similarity">
    <text evidence="2">Belongs to the short scorpion toxin superfamily. Chloride channel inhibitor family.</text>
</comment>
<dbReference type="PIR" id="JN0361">
    <property type="entry name" value="JN0361"/>
</dbReference>
<dbReference type="PDB" id="1SIS">
    <property type="method" value="NMR"/>
    <property type="chains" value="A=1-35"/>
</dbReference>
<dbReference type="PDBsum" id="1SIS"/>
<dbReference type="SMR" id="P15222"/>
<dbReference type="EvolutionaryTrace" id="P15222"/>
<dbReference type="GO" id="GO:0005576">
    <property type="term" value="C:extracellular region"/>
    <property type="evidence" value="ECO:0007669"/>
    <property type="project" value="UniProtKB-SubCell"/>
</dbReference>
<dbReference type="GO" id="GO:0017081">
    <property type="term" value="F:chloride channel regulator activity"/>
    <property type="evidence" value="ECO:0007669"/>
    <property type="project" value="UniProtKB-KW"/>
</dbReference>
<dbReference type="GO" id="GO:0090729">
    <property type="term" value="F:toxin activity"/>
    <property type="evidence" value="ECO:0007669"/>
    <property type="project" value="UniProtKB-KW"/>
</dbReference>
<dbReference type="InterPro" id="IPR036574">
    <property type="entry name" value="Scorpion_toxin-like_sf"/>
</dbReference>
<dbReference type="InterPro" id="IPR007958">
    <property type="entry name" value="Scorpion_toxinS_Cl_inh"/>
</dbReference>
<dbReference type="Pfam" id="PF05294">
    <property type="entry name" value="Toxin_5"/>
    <property type="match status" value="1"/>
</dbReference>
<dbReference type="SUPFAM" id="SSF57095">
    <property type="entry name" value="Scorpion toxin-like"/>
    <property type="match status" value="1"/>
</dbReference>
<dbReference type="PROSITE" id="PS51200">
    <property type="entry name" value="SHORT_SCORPION_CHLORIDE"/>
    <property type="match status" value="1"/>
</dbReference>
<sequence>MCMPCFTTDPNMAKKCRDCCGGNGKCFGPQCLCNR</sequence>
<organism>
    <name type="scientific">Mesobuthus eupeus</name>
    <name type="common">Lesser Asian scorpion</name>
    <name type="synonym">Buthus eupeus</name>
    <dbReference type="NCBI Taxonomy" id="34648"/>
    <lineage>
        <taxon>Eukaryota</taxon>
        <taxon>Metazoa</taxon>
        <taxon>Ecdysozoa</taxon>
        <taxon>Arthropoda</taxon>
        <taxon>Chelicerata</taxon>
        <taxon>Arachnida</taxon>
        <taxon>Scorpiones</taxon>
        <taxon>Buthida</taxon>
        <taxon>Buthoidea</taxon>
        <taxon>Buthidae</taxon>
        <taxon>Mesobuthus</taxon>
    </lineage>
</organism>
<accession>P15222</accession>
<protein>
    <recommendedName>
        <fullName evidence="7">Insectotoxin-I5A</fullName>
        <shortName evidence="7">BeIT5A</shortName>
    </recommendedName>
</protein>
<feature type="peptide" id="PRO_0000044939" description="Insectotoxin-I5A" evidence="5">
    <location>
        <begin position="1"/>
        <end position="35"/>
    </location>
</feature>
<feature type="modified residue" description="Arginine amide" evidence="5">
    <location>
        <position position="35"/>
    </location>
</feature>
<feature type="disulfide bond" evidence="4 6 9">
    <location>
        <begin position="2"/>
        <end position="19"/>
    </location>
</feature>
<feature type="disulfide bond" evidence="4 6 9">
    <location>
        <begin position="5"/>
        <end position="26"/>
    </location>
</feature>
<feature type="disulfide bond" evidence="4 6 9">
    <location>
        <begin position="16"/>
        <end position="31"/>
    </location>
</feature>
<feature type="disulfide bond" evidence="4 6 9">
    <location>
        <begin position="20"/>
        <end position="33"/>
    </location>
</feature>
<feature type="helix" evidence="10">
    <location>
        <begin position="12"/>
        <end position="19"/>
    </location>
</feature>
<feature type="turn" evidence="10">
    <location>
        <begin position="20"/>
        <end position="22"/>
    </location>
</feature>
<feature type="strand" evidence="10">
    <location>
        <begin position="24"/>
        <end position="27"/>
    </location>
</feature>
<feature type="strand" evidence="10">
    <location>
        <begin position="30"/>
        <end position="33"/>
    </location>
</feature>
<name>CTX5A_MESEU</name>